<sequence>MTQDYKATLHLPATDFPMRGDLPKREPAMLERWEREGLYAQVRANAAGRPLFVLHDGPPYANGQIHLGHAVNKILKDIIVKSKYLAGFDAPYIPGWDCHGLPIEIAIEKKFGKVGVKLDAAQFRQKCREYATEQIDLQRRDFKRLGVIGDWDNPYKTLDFRFEANEIRALAKVIDNGHLTRGVKPVHWCFDCGSALAEAEIEYADKLSPTVDIAYPARDPAAIAAAFGVTLPAGTQVAVPIWTTTPWTLPASLAVSLGAELDYVLVEGPADRGQPRWLVIAEALAGKALARYGVEAVVVHGHAKGAALDQLLLAHPFYAERDIPLILGDHVSDDDGTGAVHTAPGHGQEDYQVSKQYGLLERYSAAQINPIDGRGVYLPSTPPLGDTVLAGLHIWKANDVIIDALRDTGVLLAASTMEHSYPHCWRHKTPIAFRATPQWFISMEQANLRADALKAIETVHWYPSWGQARIAGMIDGRPDWTISRQRTWGVPIALFVHRETGEPHPRSTELMRQVAERVEQGGVDVWYTLDAAELLGDEAGDYDKITDILDVWFDSGVTHEAVLVDRGLPKPADLYLEGSDQHRGWFQSSLLTGVAMDKVAPYKQCLTHGFTVDEHGRKMSKSLGNGIEPQEIMRTLGADILRLWIASADYSNEMSLSQEILKRNADAYRRLRNTARFLLGNLHGFDPLQHLVALDDMVLLDRWIVHRAHELQEKITAAYARYDFAEIVQALLNFCSVDLGSLYLDVTKDRLYTMAEDARGRRSAQSAMYHVAEAFVRWIAPVLSFTAEELWAYLPGEHSGNVLFATWYDGLAPMPADAALTSADVDKLLALREQVAKVLEPMRANGAIGAALEAEITVAADAQTAARWQPLSDELRFLFISGDVTVTAASTDDIFVSAQPTTKAKCVRCWHHQASVGSDPRHPELCSRCVSNIEGPGEERRWF</sequence>
<dbReference type="EC" id="6.1.1.5" evidence="1"/>
<dbReference type="EMBL" id="AE008922">
    <property type="protein sequence ID" value="AAM40454.1"/>
    <property type="molecule type" value="Genomic_DNA"/>
</dbReference>
<dbReference type="RefSeq" id="NP_636530.1">
    <property type="nucleotide sequence ID" value="NC_003902.1"/>
</dbReference>
<dbReference type="RefSeq" id="WP_011036353.1">
    <property type="nucleotide sequence ID" value="NC_003902.1"/>
</dbReference>
<dbReference type="SMR" id="Q8PBG6"/>
<dbReference type="STRING" id="190485.XCC1155"/>
<dbReference type="EnsemblBacteria" id="AAM40454">
    <property type="protein sequence ID" value="AAM40454"/>
    <property type="gene ID" value="XCC1155"/>
</dbReference>
<dbReference type="KEGG" id="xcc:XCC1155"/>
<dbReference type="PATRIC" id="fig|190485.4.peg.1236"/>
<dbReference type="eggNOG" id="COG0060">
    <property type="taxonomic scope" value="Bacteria"/>
</dbReference>
<dbReference type="HOGENOM" id="CLU_001493_7_0_6"/>
<dbReference type="OrthoDB" id="9810365at2"/>
<dbReference type="Proteomes" id="UP000001010">
    <property type="component" value="Chromosome"/>
</dbReference>
<dbReference type="GO" id="GO:0005829">
    <property type="term" value="C:cytosol"/>
    <property type="evidence" value="ECO:0000318"/>
    <property type="project" value="GO_Central"/>
</dbReference>
<dbReference type="GO" id="GO:0002161">
    <property type="term" value="F:aminoacyl-tRNA deacylase activity"/>
    <property type="evidence" value="ECO:0007669"/>
    <property type="project" value="InterPro"/>
</dbReference>
<dbReference type="GO" id="GO:0005524">
    <property type="term" value="F:ATP binding"/>
    <property type="evidence" value="ECO:0007669"/>
    <property type="project" value="UniProtKB-UniRule"/>
</dbReference>
<dbReference type="GO" id="GO:0004822">
    <property type="term" value="F:isoleucine-tRNA ligase activity"/>
    <property type="evidence" value="ECO:0000318"/>
    <property type="project" value="GO_Central"/>
</dbReference>
<dbReference type="GO" id="GO:0000049">
    <property type="term" value="F:tRNA binding"/>
    <property type="evidence" value="ECO:0007669"/>
    <property type="project" value="InterPro"/>
</dbReference>
<dbReference type="GO" id="GO:0008270">
    <property type="term" value="F:zinc ion binding"/>
    <property type="evidence" value="ECO:0007669"/>
    <property type="project" value="UniProtKB-UniRule"/>
</dbReference>
<dbReference type="GO" id="GO:0006428">
    <property type="term" value="P:isoleucyl-tRNA aminoacylation"/>
    <property type="evidence" value="ECO:0000318"/>
    <property type="project" value="GO_Central"/>
</dbReference>
<dbReference type="CDD" id="cd07960">
    <property type="entry name" value="Anticodon_Ia_Ile_BEm"/>
    <property type="match status" value="1"/>
</dbReference>
<dbReference type="FunFam" id="1.10.730.20:FF:000001">
    <property type="entry name" value="Isoleucine--tRNA ligase"/>
    <property type="match status" value="1"/>
</dbReference>
<dbReference type="FunFam" id="3.40.50.620:FF:000042">
    <property type="entry name" value="Isoleucine--tRNA ligase"/>
    <property type="match status" value="1"/>
</dbReference>
<dbReference type="FunFam" id="3.40.50.620:FF:000048">
    <property type="entry name" value="Isoleucine--tRNA ligase"/>
    <property type="match status" value="1"/>
</dbReference>
<dbReference type="FunFam" id="3.90.740.10:FF:000022">
    <property type="entry name" value="Isoleucine--tRNA ligase"/>
    <property type="match status" value="1"/>
</dbReference>
<dbReference type="Gene3D" id="1.10.730.20">
    <property type="match status" value="1"/>
</dbReference>
<dbReference type="Gene3D" id="3.40.50.620">
    <property type="entry name" value="HUPs"/>
    <property type="match status" value="2"/>
</dbReference>
<dbReference type="Gene3D" id="1.10.10.830">
    <property type="entry name" value="Ile-tRNA synthetase CP2 domain-like"/>
    <property type="match status" value="1"/>
</dbReference>
<dbReference type="Gene3D" id="3.90.740.10">
    <property type="entry name" value="Valyl/Leucyl/Isoleucyl-tRNA synthetase, editing domain"/>
    <property type="match status" value="1"/>
</dbReference>
<dbReference type="HAMAP" id="MF_02002">
    <property type="entry name" value="Ile_tRNA_synth_type1"/>
    <property type="match status" value="1"/>
</dbReference>
<dbReference type="InterPro" id="IPR001412">
    <property type="entry name" value="aa-tRNA-synth_I_CS"/>
</dbReference>
<dbReference type="InterPro" id="IPR002300">
    <property type="entry name" value="aa-tRNA-synth_Ia"/>
</dbReference>
<dbReference type="InterPro" id="IPR033708">
    <property type="entry name" value="Anticodon_Ile_BEm"/>
</dbReference>
<dbReference type="InterPro" id="IPR002301">
    <property type="entry name" value="Ile-tRNA-ligase"/>
</dbReference>
<dbReference type="InterPro" id="IPR023585">
    <property type="entry name" value="Ile-tRNA-ligase_type1"/>
</dbReference>
<dbReference type="InterPro" id="IPR050081">
    <property type="entry name" value="Ile-tRNA_ligase"/>
</dbReference>
<dbReference type="InterPro" id="IPR013155">
    <property type="entry name" value="M/V/L/I-tRNA-synth_anticd-bd"/>
</dbReference>
<dbReference type="InterPro" id="IPR014729">
    <property type="entry name" value="Rossmann-like_a/b/a_fold"/>
</dbReference>
<dbReference type="InterPro" id="IPR009080">
    <property type="entry name" value="tRNAsynth_Ia_anticodon-bd"/>
</dbReference>
<dbReference type="InterPro" id="IPR009008">
    <property type="entry name" value="Val/Leu/Ile-tRNA-synth_edit"/>
</dbReference>
<dbReference type="InterPro" id="IPR010663">
    <property type="entry name" value="Znf_FPG/IleRS"/>
</dbReference>
<dbReference type="NCBIfam" id="TIGR00392">
    <property type="entry name" value="ileS"/>
    <property type="match status" value="1"/>
</dbReference>
<dbReference type="PANTHER" id="PTHR42765:SF1">
    <property type="entry name" value="ISOLEUCINE--TRNA LIGASE, MITOCHONDRIAL"/>
    <property type="match status" value="1"/>
</dbReference>
<dbReference type="PANTHER" id="PTHR42765">
    <property type="entry name" value="SOLEUCYL-TRNA SYNTHETASE"/>
    <property type="match status" value="1"/>
</dbReference>
<dbReference type="Pfam" id="PF08264">
    <property type="entry name" value="Anticodon_1"/>
    <property type="match status" value="1"/>
</dbReference>
<dbReference type="Pfam" id="PF00133">
    <property type="entry name" value="tRNA-synt_1"/>
    <property type="match status" value="1"/>
</dbReference>
<dbReference type="Pfam" id="PF06827">
    <property type="entry name" value="zf-FPG_IleRS"/>
    <property type="match status" value="1"/>
</dbReference>
<dbReference type="PRINTS" id="PR00984">
    <property type="entry name" value="TRNASYNTHILE"/>
</dbReference>
<dbReference type="SUPFAM" id="SSF47323">
    <property type="entry name" value="Anticodon-binding domain of a subclass of class I aminoacyl-tRNA synthetases"/>
    <property type="match status" value="1"/>
</dbReference>
<dbReference type="SUPFAM" id="SSF52374">
    <property type="entry name" value="Nucleotidylyl transferase"/>
    <property type="match status" value="1"/>
</dbReference>
<dbReference type="SUPFAM" id="SSF50677">
    <property type="entry name" value="ValRS/IleRS/LeuRS editing domain"/>
    <property type="match status" value="1"/>
</dbReference>
<dbReference type="PROSITE" id="PS00178">
    <property type="entry name" value="AA_TRNA_LIGASE_I"/>
    <property type="match status" value="1"/>
</dbReference>
<keyword id="KW-0030">Aminoacyl-tRNA synthetase</keyword>
<keyword id="KW-0067">ATP-binding</keyword>
<keyword id="KW-0963">Cytoplasm</keyword>
<keyword id="KW-0436">Ligase</keyword>
<keyword id="KW-0479">Metal-binding</keyword>
<keyword id="KW-0547">Nucleotide-binding</keyword>
<keyword id="KW-0648">Protein biosynthesis</keyword>
<keyword id="KW-1185">Reference proteome</keyword>
<keyword id="KW-0862">Zinc</keyword>
<reference key="1">
    <citation type="journal article" date="2002" name="Nature">
        <title>Comparison of the genomes of two Xanthomonas pathogens with differing host specificities.</title>
        <authorList>
            <person name="da Silva A.C.R."/>
            <person name="Ferro J.A."/>
            <person name="Reinach F.C."/>
            <person name="Farah C.S."/>
            <person name="Furlan L.R."/>
            <person name="Quaggio R.B."/>
            <person name="Monteiro-Vitorello C.B."/>
            <person name="Van Sluys M.A."/>
            <person name="Almeida N.F. Jr."/>
            <person name="Alves L.M.C."/>
            <person name="do Amaral A.M."/>
            <person name="Bertolini M.C."/>
            <person name="Camargo L.E.A."/>
            <person name="Camarotte G."/>
            <person name="Cannavan F."/>
            <person name="Cardozo J."/>
            <person name="Chambergo F."/>
            <person name="Ciapina L.P."/>
            <person name="Cicarelli R.M.B."/>
            <person name="Coutinho L.L."/>
            <person name="Cursino-Santos J.R."/>
            <person name="El-Dorry H."/>
            <person name="Faria J.B."/>
            <person name="Ferreira A.J.S."/>
            <person name="Ferreira R.C.C."/>
            <person name="Ferro M.I.T."/>
            <person name="Formighieri E.F."/>
            <person name="Franco M.C."/>
            <person name="Greggio C.C."/>
            <person name="Gruber A."/>
            <person name="Katsuyama A.M."/>
            <person name="Kishi L.T."/>
            <person name="Leite R.P."/>
            <person name="Lemos E.G.M."/>
            <person name="Lemos M.V.F."/>
            <person name="Locali E.C."/>
            <person name="Machado M.A."/>
            <person name="Madeira A.M.B.N."/>
            <person name="Martinez-Rossi N.M."/>
            <person name="Martins E.C."/>
            <person name="Meidanis J."/>
            <person name="Menck C.F.M."/>
            <person name="Miyaki C.Y."/>
            <person name="Moon D.H."/>
            <person name="Moreira L.M."/>
            <person name="Novo M.T.M."/>
            <person name="Okura V.K."/>
            <person name="Oliveira M.C."/>
            <person name="Oliveira V.R."/>
            <person name="Pereira H.A."/>
            <person name="Rossi A."/>
            <person name="Sena J.A.D."/>
            <person name="Silva C."/>
            <person name="de Souza R.F."/>
            <person name="Spinola L.A.F."/>
            <person name="Takita M.A."/>
            <person name="Tamura R.E."/>
            <person name="Teixeira E.C."/>
            <person name="Tezza R.I.D."/>
            <person name="Trindade dos Santos M."/>
            <person name="Truffi D."/>
            <person name="Tsai S.M."/>
            <person name="White F.F."/>
            <person name="Setubal J.C."/>
            <person name="Kitajima J.P."/>
        </authorList>
    </citation>
    <scope>NUCLEOTIDE SEQUENCE [LARGE SCALE GENOMIC DNA]</scope>
    <source>
        <strain>ATCC 33913 / DSM 3586 / NCPPB 528 / LMG 568 / P 25</strain>
    </source>
</reference>
<protein>
    <recommendedName>
        <fullName evidence="1">Isoleucine--tRNA ligase</fullName>
        <ecNumber evidence="1">6.1.1.5</ecNumber>
    </recommendedName>
    <alternativeName>
        <fullName evidence="1">Isoleucyl-tRNA synthetase</fullName>
        <shortName evidence="1">IleRS</shortName>
    </alternativeName>
</protein>
<feature type="chain" id="PRO_0000098505" description="Isoleucine--tRNA ligase">
    <location>
        <begin position="1"/>
        <end position="943"/>
    </location>
</feature>
<feature type="short sequence motif" description="'HIGH' region">
    <location>
        <begin position="59"/>
        <end position="69"/>
    </location>
</feature>
<feature type="short sequence motif" description="'KMSKS' region">
    <location>
        <begin position="618"/>
        <end position="622"/>
    </location>
</feature>
<feature type="binding site" evidence="1">
    <location>
        <position position="577"/>
    </location>
    <ligand>
        <name>L-isoleucyl-5'-AMP</name>
        <dbReference type="ChEBI" id="CHEBI:178002"/>
    </ligand>
</feature>
<feature type="binding site" evidence="1">
    <location>
        <position position="621"/>
    </location>
    <ligand>
        <name>ATP</name>
        <dbReference type="ChEBI" id="CHEBI:30616"/>
    </ligand>
</feature>
<feature type="binding site" evidence="1">
    <location>
        <position position="906"/>
    </location>
    <ligand>
        <name>Zn(2+)</name>
        <dbReference type="ChEBI" id="CHEBI:29105"/>
    </ligand>
</feature>
<feature type="binding site" evidence="1">
    <location>
        <position position="909"/>
    </location>
    <ligand>
        <name>Zn(2+)</name>
        <dbReference type="ChEBI" id="CHEBI:29105"/>
    </ligand>
</feature>
<feature type="binding site" evidence="1">
    <location>
        <position position="926"/>
    </location>
    <ligand>
        <name>Zn(2+)</name>
        <dbReference type="ChEBI" id="CHEBI:29105"/>
    </ligand>
</feature>
<feature type="binding site" evidence="1">
    <location>
        <position position="929"/>
    </location>
    <ligand>
        <name>Zn(2+)</name>
        <dbReference type="ChEBI" id="CHEBI:29105"/>
    </ligand>
</feature>
<evidence type="ECO:0000255" key="1">
    <source>
        <dbReference type="HAMAP-Rule" id="MF_02002"/>
    </source>
</evidence>
<gene>
    <name evidence="1" type="primary">ileS</name>
    <name type="ordered locus">XCC1155</name>
</gene>
<name>SYI_XANCP</name>
<organism>
    <name type="scientific">Xanthomonas campestris pv. campestris (strain ATCC 33913 / DSM 3586 / NCPPB 528 / LMG 568 / P 25)</name>
    <dbReference type="NCBI Taxonomy" id="190485"/>
    <lineage>
        <taxon>Bacteria</taxon>
        <taxon>Pseudomonadati</taxon>
        <taxon>Pseudomonadota</taxon>
        <taxon>Gammaproteobacteria</taxon>
        <taxon>Lysobacterales</taxon>
        <taxon>Lysobacteraceae</taxon>
        <taxon>Xanthomonas</taxon>
    </lineage>
</organism>
<proteinExistence type="inferred from homology"/>
<comment type="function">
    <text evidence="1">Catalyzes the attachment of isoleucine to tRNA(Ile). As IleRS can inadvertently accommodate and process structurally similar amino acids such as valine, to avoid such errors it has two additional distinct tRNA(Ile)-dependent editing activities. One activity is designated as 'pretransfer' editing and involves the hydrolysis of activated Val-AMP. The other activity is designated 'posttransfer' editing and involves deacylation of mischarged Val-tRNA(Ile).</text>
</comment>
<comment type="catalytic activity">
    <reaction evidence="1">
        <text>tRNA(Ile) + L-isoleucine + ATP = L-isoleucyl-tRNA(Ile) + AMP + diphosphate</text>
        <dbReference type="Rhea" id="RHEA:11060"/>
        <dbReference type="Rhea" id="RHEA-COMP:9666"/>
        <dbReference type="Rhea" id="RHEA-COMP:9695"/>
        <dbReference type="ChEBI" id="CHEBI:30616"/>
        <dbReference type="ChEBI" id="CHEBI:33019"/>
        <dbReference type="ChEBI" id="CHEBI:58045"/>
        <dbReference type="ChEBI" id="CHEBI:78442"/>
        <dbReference type="ChEBI" id="CHEBI:78528"/>
        <dbReference type="ChEBI" id="CHEBI:456215"/>
        <dbReference type="EC" id="6.1.1.5"/>
    </reaction>
</comment>
<comment type="cofactor">
    <cofactor evidence="1">
        <name>Zn(2+)</name>
        <dbReference type="ChEBI" id="CHEBI:29105"/>
    </cofactor>
    <text evidence="1">Binds 1 zinc ion per subunit.</text>
</comment>
<comment type="subunit">
    <text evidence="1">Monomer.</text>
</comment>
<comment type="subcellular location">
    <subcellularLocation>
        <location evidence="1">Cytoplasm</location>
    </subcellularLocation>
</comment>
<comment type="domain">
    <text evidence="1">IleRS has two distinct active sites: one for aminoacylation and one for editing. The misactivated valine is translocated from the active site to the editing site, which sterically excludes the correctly activated isoleucine. The single editing site contains two valyl binding pockets, one specific for each substrate (Val-AMP or Val-tRNA(Ile)).</text>
</comment>
<comment type="similarity">
    <text evidence="1">Belongs to the class-I aminoacyl-tRNA synthetase family. IleS type 1 subfamily.</text>
</comment>
<accession>Q8PBG6</accession>